<name>Y093_MYCS2</name>
<reference key="1">
    <citation type="submission" date="2006-10" db="EMBL/GenBank/DDBJ databases">
        <authorList>
            <person name="Fleischmann R.D."/>
            <person name="Dodson R.J."/>
            <person name="Haft D.H."/>
            <person name="Merkel J.S."/>
            <person name="Nelson W.C."/>
            <person name="Fraser C.M."/>
        </authorList>
    </citation>
    <scope>NUCLEOTIDE SEQUENCE [LARGE SCALE GENOMIC DNA]</scope>
    <source>
        <strain>ATCC 700084 / mc(2)155</strain>
    </source>
</reference>
<reference key="2">
    <citation type="journal article" date="2007" name="Genome Biol.">
        <title>Interrupted coding sequences in Mycobacterium smegmatis: authentic mutations or sequencing errors?</title>
        <authorList>
            <person name="Deshayes C."/>
            <person name="Perrodou E."/>
            <person name="Gallien S."/>
            <person name="Euphrasie D."/>
            <person name="Schaeffer C."/>
            <person name="Van-Dorsselaer A."/>
            <person name="Poch O."/>
            <person name="Lecompte O."/>
            <person name="Reyrat J.-M."/>
        </authorList>
    </citation>
    <scope>NUCLEOTIDE SEQUENCE [LARGE SCALE GENOMIC DNA]</scope>
    <source>
        <strain>ATCC 700084 / mc(2)155</strain>
    </source>
</reference>
<reference key="3">
    <citation type="journal article" date="2009" name="Genome Res.">
        <title>Ortho-proteogenomics: multiple proteomes investigation through orthology and a new MS-based protocol.</title>
        <authorList>
            <person name="Gallien S."/>
            <person name="Perrodou E."/>
            <person name="Carapito C."/>
            <person name="Deshayes C."/>
            <person name="Reyrat J.-M."/>
            <person name="Van Dorsselaer A."/>
            <person name="Poch O."/>
            <person name="Schaeffer C."/>
            <person name="Lecompte O."/>
        </authorList>
    </citation>
    <scope>NUCLEOTIDE SEQUENCE [LARGE SCALE GENOMIC DNA]</scope>
    <source>
        <strain>ATCC 700084 / mc(2)155</strain>
    </source>
</reference>
<protein>
    <recommendedName>
        <fullName>Putative S-adenosyl-L-methionine-dependent methyltransferase MSMEG_0093</fullName>
        <ecNumber>2.1.1.-</ecNumber>
    </recommendedName>
</protein>
<sequence length="317" mass="34832">MRETPSVRSARDSWGITESVGATALGVAAARAAETAQADPLIRDEFAFLLVSAAGPTWAQMAVSDPHWLGADADARRIHEISRNYQAVRTHYFDEYFSDVAHAGIRQVVILAAGLDSRAFRLDWPAGTTVFEIDQPKVLEYKTATLDAHGAVAKARYVPVPADLRDDWPAALVEAGFDPAQPTAWLAEGLLPYLPADAQDRLFELVGVNSAPGSRIAVEAFNMSPERYTEERRAQRRARGEQMRKQLDLDIDVDALMYTADDRADAAQWLSEHGWQVEAVPSADEMARLGRPAAEADLAEFGMDGVLMRARLDGERL</sequence>
<dbReference type="EC" id="2.1.1.-"/>
<dbReference type="EMBL" id="CP000480">
    <property type="protein sequence ID" value="ABK70224.1"/>
    <property type="status" value="ALT_INIT"/>
    <property type="molecule type" value="Genomic_DNA"/>
</dbReference>
<dbReference type="EMBL" id="CP001663">
    <property type="protein sequence ID" value="AFP36573.1"/>
    <property type="status" value="ALT_INIT"/>
    <property type="molecule type" value="Genomic_DNA"/>
</dbReference>
<dbReference type="RefSeq" id="YP_884509.1">
    <property type="nucleotide sequence ID" value="NC_008596.1"/>
</dbReference>
<dbReference type="SMR" id="A0QNM1"/>
<dbReference type="STRING" id="246196.MSMEG_0093"/>
<dbReference type="PaxDb" id="246196-MSMEI_0091"/>
<dbReference type="KEGG" id="msg:MSMEI_0091"/>
<dbReference type="KEGG" id="msm:MSMEG_0093"/>
<dbReference type="PATRIC" id="fig|246196.19.peg.91"/>
<dbReference type="eggNOG" id="COG3315">
    <property type="taxonomic scope" value="Bacteria"/>
</dbReference>
<dbReference type="OrthoDB" id="9806164at2"/>
<dbReference type="Proteomes" id="UP000000757">
    <property type="component" value="Chromosome"/>
</dbReference>
<dbReference type="Proteomes" id="UP000006158">
    <property type="component" value="Chromosome"/>
</dbReference>
<dbReference type="GO" id="GO:0008168">
    <property type="term" value="F:methyltransferase activity"/>
    <property type="evidence" value="ECO:0007669"/>
    <property type="project" value="UniProtKB-KW"/>
</dbReference>
<dbReference type="GO" id="GO:0032259">
    <property type="term" value="P:methylation"/>
    <property type="evidence" value="ECO:0007669"/>
    <property type="project" value="UniProtKB-KW"/>
</dbReference>
<dbReference type="Gene3D" id="3.40.50.150">
    <property type="entry name" value="Vaccinia Virus protein VP39"/>
    <property type="match status" value="1"/>
</dbReference>
<dbReference type="InterPro" id="IPR007213">
    <property type="entry name" value="Ppm1/Ppm2/Tcmp"/>
</dbReference>
<dbReference type="InterPro" id="IPR029063">
    <property type="entry name" value="SAM-dependent_MTases_sf"/>
</dbReference>
<dbReference type="InterPro" id="IPR011610">
    <property type="entry name" value="SAM_mthyl_Trfase_ML2640-like"/>
</dbReference>
<dbReference type="NCBIfam" id="TIGR00027">
    <property type="entry name" value="mthyl_TIGR00027"/>
    <property type="match status" value="1"/>
</dbReference>
<dbReference type="PANTHER" id="PTHR43619">
    <property type="entry name" value="S-ADENOSYL-L-METHIONINE-DEPENDENT METHYLTRANSFERASE YKTD-RELATED"/>
    <property type="match status" value="1"/>
</dbReference>
<dbReference type="PANTHER" id="PTHR43619:SF2">
    <property type="entry name" value="S-ADENOSYL-L-METHIONINE-DEPENDENT METHYLTRANSFERASES SUPERFAMILY PROTEIN"/>
    <property type="match status" value="1"/>
</dbReference>
<dbReference type="Pfam" id="PF04072">
    <property type="entry name" value="LCM"/>
    <property type="match status" value="1"/>
</dbReference>
<dbReference type="SUPFAM" id="SSF53335">
    <property type="entry name" value="S-adenosyl-L-methionine-dependent methyltransferases"/>
    <property type="match status" value="1"/>
</dbReference>
<feature type="chain" id="PRO_0000361193" description="Putative S-adenosyl-L-methionine-dependent methyltransferase MSMEG_0093">
    <location>
        <begin position="1"/>
        <end position="317"/>
    </location>
</feature>
<feature type="binding site" evidence="1">
    <location>
        <position position="134"/>
    </location>
    <ligand>
        <name>S-adenosyl-L-methionine</name>
        <dbReference type="ChEBI" id="CHEBI:59789"/>
    </ligand>
</feature>
<feature type="binding site" evidence="1">
    <location>
        <begin position="163"/>
        <end position="164"/>
    </location>
    <ligand>
        <name>S-adenosyl-L-methionine</name>
        <dbReference type="ChEBI" id="CHEBI:59789"/>
    </ligand>
</feature>
<proteinExistence type="inferred from homology"/>
<organism>
    <name type="scientific">Mycolicibacterium smegmatis (strain ATCC 700084 / mc(2)155)</name>
    <name type="common">Mycobacterium smegmatis</name>
    <dbReference type="NCBI Taxonomy" id="246196"/>
    <lineage>
        <taxon>Bacteria</taxon>
        <taxon>Bacillati</taxon>
        <taxon>Actinomycetota</taxon>
        <taxon>Actinomycetes</taxon>
        <taxon>Mycobacteriales</taxon>
        <taxon>Mycobacteriaceae</taxon>
        <taxon>Mycolicibacterium</taxon>
    </lineage>
</organism>
<gene>
    <name type="ordered locus">MSMEG_0093</name>
    <name type="ordered locus">MSMEI_0091</name>
</gene>
<keyword id="KW-0489">Methyltransferase</keyword>
<keyword id="KW-1185">Reference proteome</keyword>
<keyword id="KW-0949">S-adenosyl-L-methionine</keyword>
<keyword id="KW-0808">Transferase</keyword>
<accession>A0QNM1</accession>
<accession>I7FCF8</accession>
<comment type="function">
    <text evidence="1">Exhibits S-adenosyl-L-methionine-dependent methyltransferase activity.</text>
</comment>
<comment type="similarity">
    <text evidence="2">Belongs to the UPF0677 family.</text>
</comment>
<comment type="sequence caution" evidence="2">
    <conflict type="erroneous initiation">
        <sequence resource="EMBL-CDS" id="ABK70224"/>
    </conflict>
    <text>Extended N-terminus.</text>
</comment>
<comment type="sequence caution" evidence="2">
    <conflict type="erroneous initiation">
        <sequence resource="EMBL-CDS" id="AFP36573"/>
    </conflict>
    <text>Extended N-terminus.</text>
</comment>
<evidence type="ECO:0000250" key="1"/>
<evidence type="ECO:0000305" key="2"/>